<name>LEU1_PARL1</name>
<reference key="1">
    <citation type="journal article" date="2011" name="Stand. Genomic Sci.">
        <title>Complete genome sequence of Parvibaculum lavamentivorans type strain (DS-1(T)).</title>
        <authorList>
            <person name="Schleheck D."/>
            <person name="Weiss M."/>
            <person name="Pitluck S."/>
            <person name="Bruce D."/>
            <person name="Land M.L."/>
            <person name="Han S."/>
            <person name="Saunders E."/>
            <person name="Tapia R."/>
            <person name="Detter C."/>
            <person name="Brettin T."/>
            <person name="Han J."/>
            <person name="Woyke T."/>
            <person name="Goodwin L."/>
            <person name="Pennacchio L."/>
            <person name="Nolan M."/>
            <person name="Cook A.M."/>
            <person name="Kjelleberg S."/>
            <person name="Thomas T."/>
        </authorList>
    </citation>
    <scope>NUCLEOTIDE SEQUENCE [LARGE SCALE GENOMIC DNA]</scope>
    <source>
        <strain>DS-1 / DSM 13023 / NCIMB 13966</strain>
    </source>
</reference>
<gene>
    <name evidence="1" type="primary">leuA</name>
    <name type="ordered locus">Plav_0013</name>
</gene>
<sequence>MLKNPSVKYRAFAPVPLSDRQWPSKTITKPPIWMSTDLRDGNQALFEPMNAERKLRMFEMLVKIGFKEIEAGFPSASDTDFGFIRKLVEEGRVPDDVHIEVLTQARPELIARTMESLKGAKNAIVHVYNATAPNFREVVFQQGKQGVKAIATESARQIKEIAATQPETNWTFQYSPEVFSGTELDFAKEVVDAVTEIWEAGPERKVVINLPATVEMATPNIYADQIEWMHRNLERRDGIILSVHPHNDRGTAVAAAELAIMAGADRVEGCLFGNGERTGNVDLVTLALNLYSQGIDPGLDFAQINEIARTAEYCTQLPIHPRHPYVGDLVFTAFSGSHQDAIKKGLAAYKAGDIWQVPYLPLDPKDLGRTYESIIRVNSQSGKGGVSYLLEAEYDLRLPRRLQVEFSSAVQRVTDDTGKEVRAADIWRIFEEEYLTRAEPIEYLSHSLYDESGKQGVKIRIRRFGKEEELSGSGNGPIDAAMDALKLGVELRHYEEHSIGSGTDAKAVAFMEVADPEHPGDLFGVGIDANIITASFKAMLSAANRAAARRPKSEWARLCGGAE</sequence>
<dbReference type="EC" id="2.3.3.13" evidence="1"/>
<dbReference type="EMBL" id="CP000774">
    <property type="protein sequence ID" value="ABS61636.1"/>
    <property type="molecule type" value="Genomic_DNA"/>
</dbReference>
<dbReference type="SMR" id="A7HP03"/>
<dbReference type="STRING" id="402881.Plav_0013"/>
<dbReference type="KEGG" id="pla:Plav_0013"/>
<dbReference type="eggNOG" id="COG0119">
    <property type="taxonomic scope" value="Bacteria"/>
</dbReference>
<dbReference type="HOGENOM" id="CLU_004588_3_0_5"/>
<dbReference type="OrthoDB" id="9803573at2"/>
<dbReference type="UniPathway" id="UPA00048">
    <property type="reaction ID" value="UER00070"/>
</dbReference>
<dbReference type="Proteomes" id="UP000006377">
    <property type="component" value="Chromosome"/>
</dbReference>
<dbReference type="GO" id="GO:0005737">
    <property type="term" value="C:cytoplasm"/>
    <property type="evidence" value="ECO:0007669"/>
    <property type="project" value="UniProtKB-SubCell"/>
</dbReference>
<dbReference type="GO" id="GO:0003852">
    <property type="term" value="F:2-isopropylmalate synthase activity"/>
    <property type="evidence" value="ECO:0007669"/>
    <property type="project" value="UniProtKB-UniRule"/>
</dbReference>
<dbReference type="GO" id="GO:0003985">
    <property type="term" value="F:acetyl-CoA C-acetyltransferase activity"/>
    <property type="evidence" value="ECO:0007669"/>
    <property type="project" value="UniProtKB-UniRule"/>
</dbReference>
<dbReference type="GO" id="GO:0000287">
    <property type="term" value="F:magnesium ion binding"/>
    <property type="evidence" value="ECO:0007669"/>
    <property type="project" value="UniProtKB-UniRule"/>
</dbReference>
<dbReference type="GO" id="GO:0009098">
    <property type="term" value="P:L-leucine biosynthetic process"/>
    <property type="evidence" value="ECO:0007669"/>
    <property type="project" value="UniProtKB-UniRule"/>
</dbReference>
<dbReference type="CDD" id="cd07942">
    <property type="entry name" value="DRE_TIM_LeuA"/>
    <property type="match status" value="1"/>
</dbReference>
<dbReference type="Gene3D" id="3.30.160.270">
    <property type="match status" value="1"/>
</dbReference>
<dbReference type="Gene3D" id="3.20.20.70">
    <property type="entry name" value="Aldolase class I"/>
    <property type="match status" value="1"/>
</dbReference>
<dbReference type="HAMAP" id="MF_00572">
    <property type="entry name" value="LeuA_type2"/>
    <property type="match status" value="1"/>
</dbReference>
<dbReference type="InterPro" id="IPR013709">
    <property type="entry name" value="2-isopropylmalate_synth_dimer"/>
</dbReference>
<dbReference type="InterPro" id="IPR002034">
    <property type="entry name" value="AIPM/Hcit_synth_CS"/>
</dbReference>
<dbReference type="InterPro" id="IPR013785">
    <property type="entry name" value="Aldolase_TIM"/>
</dbReference>
<dbReference type="InterPro" id="IPR005668">
    <property type="entry name" value="IPM_Synthase"/>
</dbReference>
<dbReference type="InterPro" id="IPR054692">
    <property type="entry name" value="LeuA-like_post-cat"/>
</dbReference>
<dbReference type="InterPro" id="IPR036230">
    <property type="entry name" value="LeuA_allosteric_dom_sf"/>
</dbReference>
<dbReference type="InterPro" id="IPR039371">
    <property type="entry name" value="LeuA_N_DRE-TIM"/>
</dbReference>
<dbReference type="InterPro" id="IPR000891">
    <property type="entry name" value="PYR_CT"/>
</dbReference>
<dbReference type="NCBIfam" id="TIGR00970">
    <property type="entry name" value="leuA_yeast"/>
    <property type="match status" value="1"/>
</dbReference>
<dbReference type="NCBIfam" id="NF002991">
    <property type="entry name" value="PRK03739.1"/>
    <property type="match status" value="1"/>
</dbReference>
<dbReference type="PANTHER" id="PTHR46911">
    <property type="match status" value="1"/>
</dbReference>
<dbReference type="PANTHER" id="PTHR46911:SF1">
    <property type="entry name" value="2-ISOPROPYLMALATE SYNTHASE"/>
    <property type="match status" value="1"/>
</dbReference>
<dbReference type="Pfam" id="PF00682">
    <property type="entry name" value="HMGL-like"/>
    <property type="match status" value="1"/>
</dbReference>
<dbReference type="Pfam" id="PF22615">
    <property type="entry name" value="IPMS_D2"/>
    <property type="match status" value="1"/>
</dbReference>
<dbReference type="Pfam" id="PF08502">
    <property type="entry name" value="LeuA_dimer"/>
    <property type="match status" value="1"/>
</dbReference>
<dbReference type="SMART" id="SM00917">
    <property type="entry name" value="LeuA_dimer"/>
    <property type="match status" value="1"/>
</dbReference>
<dbReference type="SUPFAM" id="SSF110921">
    <property type="entry name" value="2-isopropylmalate synthase LeuA, allosteric (dimerisation) domain"/>
    <property type="match status" value="1"/>
</dbReference>
<dbReference type="SUPFAM" id="SSF51569">
    <property type="entry name" value="Aldolase"/>
    <property type="match status" value="1"/>
</dbReference>
<dbReference type="SUPFAM" id="SSF89000">
    <property type="entry name" value="post-HMGL domain-like"/>
    <property type="match status" value="1"/>
</dbReference>
<dbReference type="PROSITE" id="PS00815">
    <property type="entry name" value="AIPM_HOMOCIT_SYNTH_1"/>
    <property type="match status" value="1"/>
</dbReference>
<dbReference type="PROSITE" id="PS00816">
    <property type="entry name" value="AIPM_HOMOCIT_SYNTH_2"/>
    <property type="match status" value="1"/>
</dbReference>
<dbReference type="PROSITE" id="PS50991">
    <property type="entry name" value="PYR_CT"/>
    <property type="match status" value="1"/>
</dbReference>
<proteinExistence type="inferred from homology"/>
<comment type="function">
    <text evidence="1">Catalyzes the condensation of the acetyl group of acetyl-CoA with 3-methyl-2-oxobutanoate (2-ketoisovalerate) to form 3-carboxy-3-hydroxy-4-methylpentanoate (2-isopropylmalate).</text>
</comment>
<comment type="catalytic activity">
    <reaction evidence="1">
        <text>3-methyl-2-oxobutanoate + acetyl-CoA + H2O = (2S)-2-isopropylmalate + CoA + H(+)</text>
        <dbReference type="Rhea" id="RHEA:21524"/>
        <dbReference type="ChEBI" id="CHEBI:1178"/>
        <dbReference type="ChEBI" id="CHEBI:11851"/>
        <dbReference type="ChEBI" id="CHEBI:15377"/>
        <dbReference type="ChEBI" id="CHEBI:15378"/>
        <dbReference type="ChEBI" id="CHEBI:57287"/>
        <dbReference type="ChEBI" id="CHEBI:57288"/>
        <dbReference type="EC" id="2.3.3.13"/>
    </reaction>
</comment>
<comment type="cofactor">
    <cofactor evidence="1">
        <name>Mg(2+)</name>
        <dbReference type="ChEBI" id="CHEBI:18420"/>
    </cofactor>
</comment>
<comment type="pathway">
    <text evidence="1">Amino-acid biosynthesis; L-leucine biosynthesis; L-leucine from 3-methyl-2-oxobutanoate: step 1/4.</text>
</comment>
<comment type="subunit">
    <text evidence="1">Homodimer.</text>
</comment>
<comment type="subcellular location">
    <subcellularLocation>
        <location evidence="1">Cytoplasm</location>
    </subcellularLocation>
</comment>
<comment type="similarity">
    <text evidence="1">Belongs to the alpha-IPM synthase/homocitrate synthase family. LeuA type 2 subfamily.</text>
</comment>
<protein>
    <recommendedName>
        <fullName evidence="1">2-isopropylmalate synthase</fullName>
        <ecNumber evidence="1">2.3.3.13</ecNumber>
    </recommendedName>
    <alternativeName>
        <fullName evidence="1">Alpha-IPM synthase</fullName>
    </alternativeName>
    <alternativeName>
        <fullName evidence="1">Alpha-isopropylmalate synthase</fullName>
    </alternativeName>
</protein>
<organism>
    <name type="scientific">Parvibaculum lavamentivorans (strain DS-1 / DSM 13023 / NCIMB 13966)</name>
    <dbReference type="NCBI Taxonomy" id="402881"/>
    <lineage>
        <taxon>Bacteria</taxon>
        <taxon>Pseudomonadati</taxon>
        <taxon>Pseudomonadota</taxon>
        <taxon>Alphaproteobacteria</taxon>
        <taxon>Hyphomicrobiales</taxon>
        <taxon>Parvibaculaceae</taxon>
        <taxon>Parvibaculum</taxon>
    </lineage>
</organism>
<evidence type="ECO:0000255" key="1">
    <source>
        <dbReference type="HAMAP-Rule" id="MF_00572"/>
    </source>
</evidence>
<keyword id="KW-0028">Amino-acid biosynthesis</keyword>
<keyword id="KW-0100">Branched-chain amino acid biosynthesis</keyword>
<keyword id="KW-0963">Cytoplasm</keyword>
<keyword id="KW-0432">Leucine biosynthesis</keyword>
<keyword id="KW-0460">Magnesium</keyword>
<keyword id="KW-0479">Metal-binding</keyword>
<keyword id="KW-1185">Reference proteome</keyword>
<keyword id="KW-0808">Transferase</keyword>
<feature type="chain" id="PRO_1000129508" description="2-isopropylmalate synthase">
    <location>
        <begin position="1"/>
        <end position="563"/>
    </location>
</feature>
<feature type="domain" description="Pyruvate carboxyltransferase" evidence="1">
    <location>
        <begin position="31"/>
        <end position="305"/>
    </location>
</feature>
<feature type="region of interest" description="Regulatory domain" evidence="1">
    <location>
        <begin position="437"/>
        <end position="563"/>
    </location>
</feature>
<feature type="binding site" evidence="1">
    <location>
        <position position="40"/>
    </location>
    <ligand>
        <name>Mg(2+)</name>
        <dbReference type="ChEBI" id="CHEBI:18420"/>
    </ligand>
</feature>
<feature type="binding site" evidence="1">
    <location>
        <position position="244"/>
    </location>
    <ligand>
        <name>Mg(2+)</name>
        <dbReference type="ChEBI" id="CHEBI:18420"/>
    </ligand>
</feature>
<feature type="binding site" evidence="1">
    <location>
        <position position="246"/>
    </location>
    <ligand>
        <name>Mg(2+)</name>
        <dbReference type="ChEBI" id="CHEBI:18420"/>
    </ligand>
</feature>
<feature type="binding site" evidence="1">
    <location>
        <position position="280"/>
    </location>
    <ligand>
        <name>Mg(2+)</name>
        <dbReference type="ChEBI" id="CHEBI:18420"/>
    </ligand>
</feature>
<accession>A7HP03</accession>